<feature type="chain" id="PRO_0000276338" description="Large ribosomal subunit protein uL14c">
    <location>
        <begin position="1"/>
        <end position="122"/>
    </location>
</feature>
<evidence type="ECO:0000255" key="1">
    <source>
        <dbReference type="HAMAP-Rule" id="MF_01367"/>
    </source>
</evidence>
<evidence type="ECO:0000305" key="2"/>
<geneLocation type="chloroplast"/>
<sequence>MIQTQSFLNVADNSGARKLMCIRILNSSNCKYANIGDTIIAVVKEAIPNMSIKKSEIVKAVVVRTRKGIKRQSGITIRFDDNAAVIINQDGNPRGTRVFGPVARELREENFTKIVSLAPEVL</sequence>
<dbReference type="EMBL" id="DQ229107">
    <property type="protein sequence ID" value="ABA61950.1"/>
    <property type="molecule type" value="Genomic_DNA"/>
</dbReference>
<dbReference type="RefSeq" id="YP_635786.1">
    <property type="nucleotide sequence ID" value="NC_008097.1"/>
</dbReference>
<dbReference type="SMR" id="Q1ACG1"/>
<dbReference type="GeneID" id="4100316"/>
<dbReference type="GO" id="GO:0009507">
    <property type="term" value="C:chloroplast"/>
    <property type="evidence" value="ECO:0007669"/>
    <property type="project" value="UniProtKB-SubCell"/>
</dbReference>
<dbReference type="GO" id="GO:0022625">
    <property type="term" value="C:cytosolic large ribosomal subunit"/>
    <property type="evidence" value="ECO:0007669"/>
    <property type="project" value="TreeGrafter"/>
</dbReference>
<dbReference type="GO" id="GO:0070180">
    <property type="term" value="F:large ribosomal subunit rRNA binding"/>
    <property type="evidence" value="ECO:0007669"/>
    <property type="project" value="TreeGrafter"/>
</dbReference>
<dbReference type="GO" id="GO:0003735">
    <property type="term" value="F:structural constituent of ribosome"/>
    <property type="evidence" value="ECO:0007669"/>
    <property type="project" value="InterPro"/>
</dbReference>
<dbReference type="GO" id="GO:0006412">
    <property type="term" value="P:translation"/>
    <property type="evidence" value="ECO:0007669"/>
    <property type="project" value="UniProtKB-UniRule"/>
</dbReference>
<dbReference type="CDD" id="cd00337">
    <property type="entry name" value="Ribosomal_uL14"/>
    <property type="match status" value="1"/>
</dbReference>
<dbReference type="FunFam" id="2.40.150.20:FF:000001">
    <property type="entry name" value="50S ribosomal protein L14"/>
    <property type="match status" value="1"/>
</dbReference>
<dbReference type="Gene3D" id="2.40.150.20">
    <property type="entry name" value="Ribosomal protein L14"/>
    <property type="match status" value="1"/>
</dbReference>
<dbReference type="HAMAP" id="MF_01367">
    <property type="entry name" value="Ribosomal_uL14"/>
    <property type="match status" value="1"/>
</dbReference>
<dbReference type="InterPro" id="IPR000218">
    <property type="entry name" value="Ribosomal_uL14"/>
</dbReference>
<dbReference type="InterPro" id="IPR005745">
    <property type="entry name" value="Ribosomal_uL14_bac-type"/>
</dbReference>
<dbReference type="InterPro" id="IPR019972">
    <property type="entry name" value="Ribosomal_uL14_CS"/>
</dbReference>
<dbReference type="InterPro" id="IPR036853">
    <property type="entry name" value="Ribosomal_uL14_sf"/>
</dbReference>
<dbReference type="NCBIfam" id="TIGR01067">
    <property type="entry name" value="rplN_bact"/>
    <property type="match status" value="1"/>
</dbReference>
<dbReference type="PANTHER" id="PTHR11761">
    <property type="entry name" value="50S/60S RIBOSOMAL PROTEIN L14/L23"/>
    <property type="match status" value="1"/>
</dbReference>
<dbReference type="PANTHER" id="PTHR11761:SF3">
    <property type="entry name" value="LARGE RIBOSOMAL SUBUNIT PROTEIN UL14M"/>
    <property type="match status" value="1"/>
</dbReference>
<dbReference type="Pfam" id="PF00238">
    <property type="entry name" value="Ribosomal_L14"/>
    <property type="match status" value="1"/>
</dbReference>
<dbReference type="SMART" id="SM01374">
    <property type="entry name" value="Ribosomal_L14"/>
    <property type="match status" value="1"/>
</dbReference>
<dbReference type="SUPFAM" id="SSF50193">
    <property type="entry name" value="Ribosomal protein L14"/>
    <property type="match status" value="1"/>
</dbReference>
<dbReference type="PROSITE" id="PS00049">
    <property type="entry name" value="RIBOSOMAL_L14"/>
    <property type="match status" value="1"/>
</dbReference>
<accession>Q1ACG1</accession>
<name>RK14_CHAVU</name>
<protein>
    <recommendedName>
        <fullName evidence="1">Large ribosomal subunit protein uL14c</fullName>
    </recommendedName>
    <alternativeName>
        <fullName evidence="2">50S ribosomal protein L14, chloroplastic</fullName>
    </alternativeName>
</protein>
<organism>
    <name type="scientific">Chara vulgaris</name>
    <name type="common">Common stonewort</name>
    <dbReference type="NCBI Taxonomy" id="55564"/>
    <lineage>
        <taxon>Eukaryota</taxon>
        <taxon>Viridiplantae</taxon>
        <taxon>Streptophyta</taxon>
        <taxon>Charophyceae</taxon>
        <taxon>Charales</taxon>
        <taxon>Characeae</taxon>
        <taxon>Chara</taxon>
    </lineage>
</organism>
<gene>
    <name evidence="1" type="primary">rpl14</name>
</gene>
<proteinExistence type="inferred from homology"/>
<keyword id="KW-0150">Chloroplast</keyword>
<keyword id="KW-0934">Plastid</keyword>
<keyword id="KW-0687">Ribonucleoprotein</keyword>
<keyword id="KW-0689">Ribosomal protein</keyword>
<keyword id="KW-0694">RNA-binding</keyword>
<keyword id="KW-0699">rRNA-binding</keyword>
<reference key="1">
    <citation type="journal article" date="2006" name="Mol. Biol. Evol.">
        <title>The chloroplast genome sequence of Chara vulgaris sheds new light into the closest green algal relatives of land plants.</title>
        <authorList>
            <person name="Turmel M."/>
            <person name="Otis C."/>
            <person name="Lemieux C."/>
        </authorList>
    </citation>
    <scope>NUCLEOTIDE SEQUENCE [LARGE SCALE GENOMIC DNA]</scope>
</reference>
<comment type="function">
    <text evidence="1">Binds to 23S rRNA.</text>
</comment>
<comment type="subunit">
    <text evidence="1">Part of the 50S ribosomal subunit.</text>
</comment>
<comment type="subcellular location">
    <subcellularLocation>
        <location>Plastid</location>
        <location>Chloroplast</location>
    </subcellularLocation>
</comment>
<comment type="similarity">
    <text evidence="1">Belongs to the universal ribosomal protein uL14 family.</text>
</comment>